<gene>
    <name evidence="4" type="primary">CYP90B1</name>
    <name evidence="6" type="ordered locus">BRADI_1g69040v3</name>
</gene>
<comment type="function">
    <text evidence="3">Involved in reduction steps of the biosynthesis of plant campesterol-derivative steroids, ending to castasterone (CS) but missing brassinolide (BL) (PubMed:32146811). Catalyzes the conversion of campesterol (CR) to (22S)-22-hydroxycampesterol (22-OHCR, 22-hydroxyCR) and of campestanol (CN) to 6-deoxycathasterone (6-deoxoCT) (PubMed:32146811).</text>
</comment>
<comment type="catalytic activity">
    <reaction evidence="3">
        <text>a C27-steroid + reduced [NADPH--hemoprotein reductase] + O2 = a (22S)-22-hydroxy C27-steroid + oxidized [NADPH--hemoprotein reductase] + H2O + H(+)</text>
        <dbReference type="Rhea" id="RHEA:70059"/>
        <dbReference type="Rhea" id="RHEA-COMP:11964"/>
        <dbReference type="Rhea" id="RHEA-COMP:11965"/>
        <dbReference type="ChEBI" id="CHEBI:15377"/>
        <dbReference type="ChEBI" id="CHEBI:15378"/>
        <dbReference type="ChEBI" id="CHEBI:15379"/>
        <dbReference type="ChEBI" id="CHEBI:57618"/>
        <dbReference type="ChEBI" id="CHEBI:58210"/>
        <dbReference type="ChEBI" id="CHEBI:188919"/>
        <dbReference type="ChEBI" id="CHEBI:188920"/>
        <dbReference type="EC" id="1.14.14.178"/>
    </reaction>
    <physiologicalReaction direction="left-to-right" evidence="3">
        <dbReference type="Rhea" id="RHEA:70060"/>
    </physiologicalReaction>
</comment>
<comment type="catalytic activity">
    <reaction evidence="3">
        <text>a C28-steroid + reduced [NADPH--hemoprotein reductase] + O2 = a (22S)-22-hydroxy C28-steroid + oxidized [NADPH--hemoprotein reductase] + H2O + H(+)</text>
        <dbReference type="Rhea" id="RHEA:70063"/>
        <dbReference type="Rhea" id="RHEA-COMP:11964"/>
        <dbReference type="Rhea" id="RHEA-COMP:11965"/>
        <dbReference type="ChEBI" id="CHEBI:15377"/>
        <dbReference type="ChEBI" id="CHEBI:15378"/>
        <dbReference type="ChEBI" id="CHEBI:15379"/>
        <dbReference type="ChEBI" id="CHEBI:57618"/>
        <dbReference type="ChEBI" id="CHEBI:58210"/>
        <dbReference type="ChEBI" id="CHEBI:188921"/>
        <dbReference type="ChEBI" id="CHEBI:188922"/>
        <dbReference type="EC" id="1.14.14.178"/>
    </reaction>
    <physiologicalReaction direction="left-to-right" evidence="3">
        <dbReference type="Rhea" id="RHEA:70064"/>
    </physiologicalReaction>
</comment>
<comment type="catalytic activity">
    <reaction evidence="3">
        <text>campesterol + reduced [NADPH--hemoprotein reductase] + O2 = (22S)-22-hydroxycampesterol + oxidized [NADPH--hemoprotein reductase] + H2O + H(+)</text>
        <dbReference type="Rhea" id="RHEA:69835"/>
        <dbReference type="Rhea" id="RHEA-COMP:11964"/>
        <dbReference type="Rhea" id="RHEA-COMP:11965"/>
        <dbReference type="ChEBI" id="CHEBI:15377"/>
        <dbReference type="ChEBI" id="CHEBI:15378"/>
        <dbReference type="ChEBI" id="CHEBI:15379"/>
        <dbReference type="ChEBI" id="CHEBI:28623"/>
        <dbReference type="ChEBI" id="CHEBI:57618"/>
        <dbReference type="ChEBI" id="CHEBI:58210"/>
        <dbReference type="ChEBI" id="CHEBI:72331"/>
    </reaction>
    <physiologicalReaction direction="left-to-right" evidence="3">
        <dbReference type="Rhea" id="RHEA:69836"/>
    </physiologicalReaction>
</comment>
<comment type="catalytic activity">
    <reaction evidence="3">
        <text>campestanol + reduced [NADPH--hemoprotein reductase] + O2 = 6-deoxycathasterone + oxidized [NADPH--hemoprotein reductase] + H2O + H(+)</text>
        <dbReference type="Rhea" id="RHEA:69831"/>
        <dbReference type="Rhea" id="RHEA-COMP:11964"/>
        <dbReference type="Rhea" id="RHEA-COMP:11965"/>
        <dbReference type="ChEBI" id="CHEBI:15377"/>
        <dbReference type="ChEBI" id="CHEBI:15378"/>
        <dbReference type="ChEBI" id="CHEBI:15379"/>
        <dbReference type="ChEBI" id="CHEBI:20714"/>
        <dbReference type="ChEBI" id="CHEBI:36799"/>
        <dbReference type="ChEBI" id="CHEBI:57618"/>
        <dbReference type="ChEBI" id="CHEBI:58210"/>
    </reaction>
    <physiologicalReaction direction="left-to-right" evidence="3">
        <dbReference type="Rhea" id="RHEA:69832"/>
    </physiologicalReaction>
</comment>
<comment type="cofactor">
    <cofactor evidence="1">
        <name>heme</name>
        <dbReference type="ChEBI" id="CHEBI:30413"/>
    </cofactor>
</comment>
<comment type="pathway">
    <text evidence="3">Plant hormone biosynthesis; brassinosteroid biosynthesis.</text>
</comment>
<comment type="subcellular location">
    <subcellularLocation>
        <location evidence="2">Membrane</location>
        <topology evidence="2">Single-pass membrane protein</topology>
    </subcellularLocation>
</comment>
<comment type="similarity">
    <text evidence="5">Belongs to the cytochrome P450 family.</text>
</comment>
<proteinExistence type="evidence at protein level"/>
<evidence type="ECO:0000250" key="1">
    <source>
        <dbReference type="UniProtKB" id="P04798"/>
    </source>
</evidence>
<evidence type="ECO:0000255" key="2"/>
<evidence type="ECO:0000269" key="3">
    <source>
    </source>
</evidence>
<evidence type="ECO:0000303" key="4">
    <source>
    </source>
</evidence>
<evidence type="ECO:0000305" key="5"/>
<evidence type="ECO:0000312" key="6">
    <source>
        <dbReference type="EMBL" id="KQK22730.1"/>
    </source>
</evidence>
<dbReference type="EC" id="1.14.14.178" evidence="3"/>
<dbReference type="EMBL" id="CM000880">
    <property type="protein sequence ID" value="KQK22730.1"/>
    <property type="molecule type" value="Genomic_DNA"/>
</dbReference>
<dbReference type="RefSeq" id="XP_003558427.1">
    <property type="nucleotide sequence ID" value="XM_003558379.3"/>
</dbReference>
<dbReference type="SMR" id="I1H7R8"/>
<dbReference type="FunCoup" id="I1H7R8">
    <property type="interactions" value="149"/>
</dbReference>
<dbReference type="STRING" id="15368.I1H7R8"/>
<dbReference type="EnsemblPlants" id="KQK22730">
    <property type="protein sequence ID" value="KQK22730"/>
    <property type="gene ID" value="BRADI_1g69040v3"/>
</dbReference>
<dbReference type="GeneID" id="100837605"/>
<dbReference type="Gramene" id="KQK22730">
    <property type="protein sequence ID" value="KQK22730"/>
    <property type="gene ID" value="BRADI_1g69040v3"/>
</dbReference>
<dbReference type="KEGG" id="bdi:100837605"/>
<dbReference type="eggNOG" id="KOG0157">
    <property type="taxonomic scope" value="Eukaryota"/>
</dbReference>
<dbReference type="HOGENOM" id="CLU_001570_15_5_1"/>
<dbReference type="InParanoid" id="I1H7R8"/>
<dbReference type="OMA" id="KLWNLYC"/>
<dbReference type="OrthoDB" id="1372046at2759"/>
<dbReference type="UniPathway" id="UPA00381"/>
<dbReference type="Proteomes" id="UP000008810">
    <property type="component" value="Chromosome 1"/>
</dbReference>
<dbReference type="GO" id="GO:0005783">
    <property type="term" value="C:endoplasmic reticulum"/>
    <property type="evidence" value="ECO:0007669"/>
    <property type="project" value="EnsemblPlants"/>
</dbReference>
<dbReference type="GO" id="GO:0016020">
    <property type="term" value="C:membrane"/>
    <property type="evidence" value="ECO:0007669"/>
    <property type="project" value="UniProtKB-SubCell"/>
</dbReference>
<dbReference type="GO" id="GO:0020037">
    <property type="term" value="F:heme binding"/>
    <property type="evidence" value="ECO:0007669"/>
    <property type="project" value="InterPro"/>
</dbReference>
<dbReference type="GO" id="GO:0005506">
    <property type="term" value="F:iron ion binding"/>
    <property type="evidence" value="ECO:0007669"/>
    <property type="project" value="InterPro"/>
</dbReference>
<dbReference type="GO" id="GO:0004497">
    <property type="term" value="F:monooxygenase activity"/>
    <property type="evidence" value="ECO:0000318"/>
    <property type="project" value="GO_Central"/>
</dbReference>
<dbReference type="GO" id="GO:0016705">
    <property type="term" value="F:oxidoreductase activity, acting on paired donors, with incorporation or reduction of molecular oxygen"/>
    <property type="evidence" value="ECO:0007669"/>
    <property type="project" value="InterPro"/>
</dbReference>
<dbReference type="GO" id="GO:0016132">
    <property type="term" value="P:brassinosteroid biosynthetic process"/>
    <property type="evidence" value="ECO:0000318"/>
    <property type="project" value="GO_Central"/>
</dbReference>
<dbReference type="GO" id="GO:0010268">
    <property type="term" value="P:brassinosteroid homeostasis"/>
    <property type="evidence" value="ECO:0000318"/>
    <property type="project" value="GO_Central"/>
</dbReference>
<dbReference type="GO" id="GO:0009867">
    <property type="term" value="P:jasmonic acid mediated signaling pathway"/>
    <property type="evidence" value="ECO:0007669"/>
    <property type="project" value="EnsemblPlants"/>
</dbReference>
<dbReference type="GO" id="GO:0010358">
    <property type="term" value="P:leaf shaping"/>
    <property type="evidence" value="ECO:0007669"/>
    <property type="project" value="EnsemblPlants"/>
</dbReference>
<dbReference type="GO" id="GO:0009741">
    <property type="term" value="P:response to brassinosteroid"/>
    <property type="evidence" value="ECO:0007669"/>
    <property type="project" value="EnsemblPlants"/>
</dbReference>
<dbReference type="GO" id="GO:0009826">
    <property type="term" value="P:unidimensional cell growth"/>
    <property type="evidence" value="ECO:0007669"/>
    <property type="project" value="EnsemblPlants"/>
</dbReference>
<dbReference type="CDD" id="cd11043">
    <property type="entry name" value="CYP90-like"/>
    <property type="match status" value="1"/>
</dbReference>
<dbReference type="FunFam" id="1.10.630.10:FF:000061">
    <property type="entry name" value="Cytochrome P450 90B1"/>
    <property type="match status" value="1"/>
</dbReference>
<dbReference type="Gene3D" id="1.10.630.10">
    <property type="entry name" value="Cytochrome P450"/>
    <property type="match status" value="1"/>
</dbReference>
<dbReference type="InterPro" id="IPR001128">
    <property type="entry name" value="Cyt_P450"/>
</dbReference>
<dbReference type="InterPro" id="IPR002401">
    <property type="entry name" value="Cyt_P450_E_grp-I"/>
</dbReference>
<dbReference type="InterPro" id="IPR036396">
    <property type="entry name" value="Cyt_P450_sf"/>
</dbReference>
<dbReference type="PANTHER" id="PTHR24286">
    <property type="entry name" value="CYTOCHROME P450 26"/>
    <property type="match status" value="1"/>
</dbReference>
<dbReference type="PANTHER" id="PTHR24286:SF194">
    <property type="entry name" value="STEROID (22S)-HYDROXYLASE"/>
    <property type="match status" value="1"/>
</dbReference>
<dbReference type="Pfam" id="PF00067">
    <property type="entry name" value="p450"/>
    <property type="match status" value="1"/>
</dbReference>
<dbReference type="PRINTS" id="PR00463">
    <property type="entry name" value="EP450I"/>
</dbReference>
<dbReference type="PRINTS" id="PR00385">
    <property type="entry name" value="P450"/>
</dbReference>
<dbReference type="SUPFAM" id="SSF48264">
    <property type="entry name" value="Cytochrome P450"/>
    <property type="match status" value="1"/>
</dbReference>
<sequence length="507" mass="57945">MAAMMASITSELLFFLPYILLALLTFYTTTVAKCHRWRRTEEKRRCPNLPPGAIGWPFIGETFGYLRAHPATSVGRFMEEHIARYGKIYRSSLFGDRTVVSADAGLNRYILQNEGKLFECSYPRSIGGILGKWSMLVLVGDPHREMRAISLNFLSSLRLRAVLLPEVERHTLLVLRHWPSASPAVFSAQHEAKKFTFNLMAKNIMSMDPGEEETERLRLEYITFMKGVVSAPLNFPGTAYWKALKSRATILGVIERKMEDRLQKMNKEDSSIEEDDLLGWAMKQSNLSKEQILDLLLSLLFAGHETSSMALALAIFFLEGCPKAVQELREEHLEIARRQRLRGECKLSWEDYKDMVFTQCVINETLRLGNVVRFLHRKVIRDVHYKGYDIPSGWKILPVLAAVHLDSSLYEDPSRFNPWRWKGNASGVAQSGNFMPYGGGTRLCAGSELAKLEMAIFLHHLVLNFRWELAEPDQAFVYPFVDFPKGLPIRVHRIAQEEEKSVLTVDI</sequence>
<name>C90B1_BRADI</name>
<protein>
    <recommendedName>
        <fullName evidence="5">Steroid (22S)-hydroxylase</fullName>
        <ecNumber evidence="3">1.14.14.178</ecNumber>
    </recommendedName>
    <alternativeName>
        <fullName evidence="4">(22S)-22-hydroxycampesterol synthase</fullName>
    </alternativeName>
    <alternativeName>
        <fullName evidence="4">6-deoxycathasterone synthase</fullName>
    </alternativeName>
    <alternativeName>
        <fullName evidence="5">Cytochrome P450 90B1</fullName>
        <shortName evidence="4">BdCYP90B1</shortName>
    </alternativeName>
</protein>
<accession>I1H7R8</accession>
<reference key="1">
    <citation type="journal article" date="2010" name="Nature">
        <title>Genome sequencing and analysis of the model grass Brachypodium distachyon.</title>
        <authorList>
            <consortium name="International Brachypodium Initiative"/>
        </authorList>
    </citation>
    <scope>NUCLEOTIDE SEQUENCE [LARGE SCALE GENOMIC DNA]</scope>
    <source>
        <strain>cv. Bd21</strain>
    </source>
</reference>
<reference key="2">
    <citation type="journal article" date="2020" name="J. Agric. Food Chem.">
        <title>Establishment of biosynthetic pathways to generate castasterone as the biologically active brassinosteroid in Brachypodium distachyon.</title>
        <authorList>
            <person name="Roh J."/>
            <person name="Moon J."/>
            <person name="Youn J.-H."/>
            <person name="Seo C."/>
            <person name="Park Y.J."/>
            <person name="Kim S.-K."/>
        </authorList>
    </citation>
    <scope>FUNCTION</scope>
    <scope>CATALYTIC ACTIVITY</scope>
    <scope>PATHWAY</scope>
</reference>
<feature type="chain" id="PRO_0000455304" description="Steroid (22S)-hydroxylase">
    <location>
        <begin position="1"/>
        <end position="507"/>
    </location>
</feature>
<feature type="transmembrane region" description="Helical" evidence="2">
    <location>
        <begin position="12"/>
        <end position="32"/>
    </location>
</feature>
<feature type="binding site" description="axial binding residue" evidence="1">
    <location>
        <position position="444"/>
    </location>
    <ligand>
        <name>heme</name>
        <dbReference type="ChEBI" id="CHEBI:30413"/>
    </ligand>
    <ligandPart>
        <name>Fe</name>
        <dbReference type="ChEBI" id="CHEBI:18248"/>
    </ligandPart>
</feature>
<organism>
    <name type="scientific">Brachypodium distachyon</name>
    <name type="common">Purple false brome</name>
    <name type="synonym">Trachynia distachya</name>
    <dbReference type="NCBI Taxonomy" id="15368"/>
    <lineage>
        <taxon>Eukaryota</taxon>
        <taxon>Viridiplantae</taxon>
        <taxon>Streptophyta</taxon>
        <taxon>Embryophyta</taxon>
        <taxon>Tracheophyta</taxon>
        <taxon>Spermatophyta</taxon>
        <taxon>Magnoliopsida</taxon>
        <taxon>Liliopsida</taxon>
        <taxon>Poales</taxon>
        <taxon>Poaceae</taxon>
        <taxon>BOP clade</taxon>
        <taxon>Pooideae</taxon>
        <taxon>Stipodae</taxon>
        <taxon>Brachypodieae</taxon>
        <taxon>Brachypodium</taxon>
    </lineage>
</organism>
<keyword id="KW-0349">Heme</keyword>
<keyword id="KW-0408">Iron</keyword>
<keyword id="KW-0472">Membrane</keyword>
<keyword id="KW-0479">Metal-binding</keyword>
<keyword id="KW-0503">Monooxygenase</keyword>
<keyword id="KW-0560">Oxidoreductase</keyword>
<keyword id="KW-1185">Reference proteome</keyword>
<keyword id="KW-0812">Transmembrane</keyword>
<keyword id="KW-1133">Transmembrane helix</keyword>